<dbReference type="EMBL" id="AY653733">
    <property type="protein sequence ID" value="AAV50510.1"/>
    <property type="molecule type" value="Genomic_DNA"/>
</dbReference>
<dbReference type="KEGG" id="vg:9924844"/>
<dbReference type="Proteomes" id="UP000001134">
    <property type="component" value="Genome"/>
</dbReference>
<keyword id="KW-1185">Reference proteome</keyword>
<feature type="chain" id="PRO_0000253236" description="Uncharacterized protein L237">
    <location>
        <begin position="1"/>
        <end position="289"/>
    </location>
</feature>
<feature type="region of interest" description="Disordered" evidence="1">
    <location>
        <begin position="80"/>
        <end position="101"/>
    </location>
</feature>
<feature type="region of interest" description="Disordered" evidence="1">
    <location>
        <begin position="136"/>
        <end position="157"/>
    </location>
</feature>
<feature type="compositionally biased region" description="Polar residues" evidence="1">
    <location>
        <begin position="80"/>
        <end position="96"/>
    </location>
</feature>
<protein>
    <recommendedName>
        <fullName>Uncharacterized protein L237</fullName>
    </recommendedName>
</protein>
<evidence type="ECO:0000256" key="1">
    <source>
        <dbReference type="SAM" id="MobiDB-lite"/>
    </source>
</evidence>
<organismHost>
    <name type="scientific">Acanthamoeba polyphaga</name>
    <name type="common">Amoeba</name>
    <dbReference type="NCBI Taxonomy" id="5757"/>
</organismHost>
<proteinExistence type="predicted"/>
<name>YL237_MIMIV</name>
<organism>
    <name type="scientific">Acanthamoeba polyphaga mimivirus</name>
    <name type="common">APMV</name>
    <dbReference type="NCBI Taxonomy" id="212035"/>
    <lineage>
        <taxon>Viruses</taxon>
        <taxon>Varidnaviria</taxon>
        <taxon>Bamfordvirae</taxon>
        <taxon>Nucleocytoviricota</taxon>
        <taxon>Megaviricetes</taxon>
        <taxon>Imitervirales</taxon>
        <taxon>Mimiviridae</taxon>
        <taxon>Megamimivirinae</taxon>
        <taxon>Mimivirus</taxon>
        <taxon>Mimivirus bradfordmassiliense</taxon>
    </lineage>
</organism>
<sequence length="289" mass="33799">MSTMNMPNVLNYQYNDNNIMNNSEYWTLVNILSTPMTPEVRKIVLDKLTSINNNLLMENKTNIQSNNFFGPNFDHVSRSPLNESRTSFKNIPQSRNLPRDYVRDSSKNISKDFTRESIKNHDKEFERDYLERDNLPRENFRNDTDIPKDPLRDRMRESLRDSSRNILRSGVLNSRKKDFEENLHPSFNSLDSLNHGHRNPIPISNPISSKTSNTQFPKKIVYNPNIFDNLSDDSEEIDLDTVSDSVINNNFNRHSDNSSILDEKLNRIRNLQNKLLSVRSKKISSVRNH</sequence>
<accession>Q5UPX5</accession>
<reference key="1">
    <citation type="journal article" date="2004" name="Science">
        <title>The 1.2-megabase genome sequence of Mimivirus.</title>
        <authorList>
            <person name="Raoult D."/>
            <person name="Audic S."/>
            <person name="Robert C."/>
            <person name="Abergel C."/>
            <person name="Renesto P."/>
            <person name="Ogata H."/>
            <person name="La Scola B."/>
            <person name="Susan M."/>
            <person name="Claverie J.-M."/>
        </authorList>
    </citation>
    <scope>NUCLEOTIDE SEQUENCE [LARGE SCALE GENOMIC DNA]</scope>
    <source>
        <strain>Rowbotham-Bradford</strain>
    </source>
</reference>
<gene>
    <name type="ordered locus">MIMI_L237</name>
</gene>